<keyword id="KW-0002">3D-structure</keyword>
<keyword id="KW-0067">ATP-binding</keyword>
<keyword id="KW-0131">Cell cycle</keyword>
<keyword id="KW-0227">DNA damage</keyword>
<keyword id="KW-0418">Kinase</keyword>
<keyword id="KW-0547">Nucleotide-binding</keyword>
<keyword id="KW-0539">Nucleus</keyword>
<keyword id="KW-0597">Phosphoprotein</keyword>
<keyword id="KW-1185">Reference proteome</keyword>
<keyword id="KW-0677">Repeat</keyword>
<keyword id="KW-0723">Serine/threonine-protein kinase</keyword>
<keyword id="KW-0808">Transferase</keyword>
<keyword id="KW-0829">Tyrosine-protein kinase</keyword>
<feature type="chain" id="PRO_0000086595" description="Serine/threonine-protein kinase RAD53">
    <location>
        <begin position="1"/>
        <end position="821"/>
    </location>
</feature>
<feature type="domain" description="FHA 1" evidence="1">
    <location>
        <begin position="66"/>
        <end position="116"/>
    </location>
</feature>
<feature type="domain" description="Protein kinase" evidence="2">
    <location>
        <begin position="198"/>
        <end position="466"/>
    </location>
</feature>
<feature type="domain" description="FHA 2" evidence="1">
    <location>
        <begin position="601"/>
        <end position="664"/>
    </location>
</feature>
<feature type="region of interest" description="Disordered" evidence="3">
    <location>
        <begin position="735"/>
        <end position="770"/>
    </location>
</feature>
<feature type="region of interest" description="Disordered" evidence="3">
    <location>
        <begin position="791"/>
        <end position="821"/>
    </location>
</feature>
<feature type="compositionally biased region" description="Low complexity" evidence="3">
    <location>
        <begin position="742"/>
        <end position="770"/>
    </location>
</feature>
<feature type="compositionally biased region" description="Polar residues" evidence="3">
    <location>
        <begin position="809"/>
        <end position="821"/>
    </location>
</feature>
<feature type="active site" description="Proton acceptor">
    <location>
        <position position="319"/>
    </location>
</feature>
<feature type="binding site" evidence="2">
    <location>
        <begin position="204"/>
        <end position="212"/>
    </location>
    <ligand>
        <name>ATP</name>
        <dbReference type="ChEBI" id="CHEBI:30616"/>
    </ligand>
</feature>
<feature type="binding site" evidence="2">
    <location>
        <position position="227"/>
    </location>
    <ligand>
        <name>ATP</name>
        <dbReference type="ChEBI" id="CHEBI:30616"/>
    </ligand>
</feature>
<feature type="modified residue" description="Phosphoserine" evidence="13">
    <location>
        <position position="24"/>
    </location>
</feature>
<feature type="modified residue" description="Phosphoserine" evidence="13">
    <location>
        <position position="175"/>
    </location>
</feature>
<feature type="modified residue" description="Phosphoserine" evidence="13">
    <location>
        <position position="547"/>
    </location>
</feature>
<feature type="modified residue" description="Phosphoserine" evidence="13">
    <location>
        <position position="560"/>
    </location>
</feature>
<feature type="modified residue" description="Phosphoserine" evidence="13 14">
    <location>
        <position position="774"/>
    </location>
</feature>
<feature type="modified residue" description="Phosphoserine" evidence="13">
    <location>
        <position position="793"/>
    </location>
</feature>
<feature type="mutagenesis site" description="Disrupts interaction with PTC2." evidence="7">
    <original>R</original>
    <variation>A</variation>
    <location>
        <position position="70"/>
    </location>
</feature>
<feature type="mutagenesis site" description="Disrupts interaction with PTC2." evidence="7">
    <original>S</original>
    <variation>A</variation>
    <location>
        <position position="85"/>
    </location>
</feature>
<feature type="sequence conflict" description="In Ref. 5; AAT93028." evidence="12" ref="5">
    <original>V</original>
    <variation>A</variation>
    <location>
        <position position="204"/>
    </location>
</feature>
<feature type="helix" evidence="24">
    <location>
        <begin position="16"/>
        <end position="22"/>
    </location>
</feature>
<feature type="strand" evidence="18">
    <location>
        <begin position="31"/>
        <end position="43"/>
    </location>
</feature>
<feature type="strand" evidence="18">
    <location>
        <begin position="46"/>
        <end position="50"/>
    </location>
</feature>
<feature type="helix" evidence="18">
    <location>
        <begin position="52"/>
        <end position="57"/>
    </location>
</feature>
<feature type="strand" evidence="17">
    <location>
        <begin position="59"/>
        <end position="61"/>
    </location>
</feature>
<feature type="strand" evidence="18">
    <location>
        <begin position="64"/>
        <end position="71"/>
    </location>
</feature>
<feature type="strand" evidence="18">
    <location>
        <begin position="74"/>
        <end position="77"/>
    </location>
</feature>
<feature type="strand" evidence="23">
    <location>
        <begin position="82"/>
        <end position="84"/>
    </location>
</feature>
<feature type="strand" evidence="18">
    <location>
        <begin position="89"/>
        <end position="93"/>
    </location>
</feature>
<feature type="helix" evidence="22">
    <location>
        <begin position="95"/>
        <end position="97"/>
    </location>
</feature>
<feature type="strand" evidence="18">
    <location>
        <begin position="99"/>
        <end position="103"/>
    </location>
</feature>
<feature type="strand" evidence="24">
    <location>
        <begin position="110"/>
        <end position="115"/>
    </location>
</feature>
<feature type="strand" evidence="23">
    <location>
        <begin position="122"/>
        <end position="124"/>
    </location>
</feature>
<feature type="strand" evidence="18">
    <location>
        <begin position="129"/>
        <end position="132"/>
    </location>
</feature>
<feature type="helix" evidence="18">
    <location>
        <begin position="137"/>
        <end position="139"/>
    </location>
</feature>
<feature type="strand" evidence="18">
    <location>
        <begin position="141"/>
        <end position="147"/>
    </location>
</feature>
<feature type="helix" evidence="18">
    <location>
        <begin position="149"/>
        <end position="154"/>
    </location>
</feature>
<feature type="strand" evidence="24">
    <location>
        <begin position="160"/>
        <end position="162"/>
    </location>
</feature>
<feature type="helix" evidence="21">
    <location>
        <begin position="193"/>
        <end position="196"/>
    </location>
</feature>
<feature type="strand" evidence="21">
    <location>
        <begin position="197"/>
        <end position="201"/>
    </location>
</feature>
<feature type="strand" evidence="21">
    <location>
        <begin position="211"/>
        <end position="217"/>
    </location>
</feature>
<feature type="turn" evidence="21">
    <location>
        <begin position="218"/>
        <end position="220"/>
    </location>
</feature>
<feature type="strand" evidence="21">
    <location>
        <begin position="223"/>
        <end position="229"/>
    </location>
</feature>
<feature type="helix" evidence="24">
    <location>
        <begin position="232"/>
        <end position="234"/>
    </location>
</feature>
<feature type="helix" evidence="21">
    <location>
        <begin position="241"/>
        <end position="248"/>
    </location>
</feature>
<feature type="strand" evidence="21">
    <location>
        <begin position="259"/>
        <end position="264"/>
    </location>
</feature>
<feature type="strand" evidence="21">
    <location>
        <begin position="269"/>
        <end position="273"/>
    </location>
</feature>
<feature type="helix" evidence="21">
    <location>
        <begin position="281"/>
        <end position="288"/>
    </location>
</feature>
<feature type="helix" evidence="21">
    <location>
        <begin position="293"/>
        <end position="312"/>
    </location>
</feature>
<feature type="helix" evidence="21">
    <location>
        <begin position="322"/>
        <end position="324"/>
    </location>
</feature>
<feature type="strand" evidence="21">
    <location>
        <begin position="325"/>
        <end position="329"/>
    </location>
</feature>
<feature type="turn" evidence="21">
    <location>
        <begin position="330"/>
        <end position="333"/>
    </location>
</feature>
<feature type="strand" evidence="21">
    <location>
        <begin position="334"/>
        <end position="337"/>
    </location>
</feature>
<feature type="helix" evidence="21">
    <location>
        <begin position="359"/>
        <end position="361"/>
    </location>
</feature>
<feature type="helix" evidence="21">
    <location>
        <begin position="364"/>
        <end position="367"/>
    </location>
</feature>
<feature type="turn" evidence="21">
    <location>
        <begin position="384"/>
        <end position="386"/>
    </location>
</feature>
<feature type="helix" evidence="21">
    <location>
        <begin position="387"/>
        <end position="403"/>
    </location>
</feature>
<feature type="helix" evidence="21">
    <location>
        <begin position="413"/>
        <end position="421"/>
    </location>
</feature>
<feature type="helix" evidence="21">
    <location>
        <begin position="428"/>
        <end position="432"/>
    </location>
</feature>
<feature type="helix" evidence="21">
    <location>
        <begin position="437"/>
        <end position="446"/>
    </location>
</feature>
<feature type="helix" evidence="21">
    <location>
        <begin position="451"/>
        <end position="453"/>
    </location>
</feature>
<feature type="helix" evidence="21">
    <location>
        <begin position="457"/>
        <end position="461"/>
    </location>
</feature>
<feature type="turn" evidence="21">
    <location>
        <begin position="464"/>
        <end position="467"/>
    </location>
</feature>
<feature type="helix" evidence="21">
    <location>
        <begin position="484"/>
        <end position="493"/>
    </location>
</feature>
<feature type="strand" evidence="19">
    <location>
        <begin position="551"/>
        <end position="557"/>
    </location>
</feature>
<feature type="helix" evidence="19">
    <location>
        <begin position="563"/>
        <end position="565"/>
    </location>
</feature>
<feature type="strand" evidence="19">
    <location>
        <begin position="572"/>
        <end position="575"/>
    </location>
</feature>
<feature type="strand" evidence="15">
    <location>
        <begin position="578"/>
        <end position="582"/>
    </location>
</feature>
<feature type="strand" evidence="19">
    <location>
        <begin position="586"/>
        <end position="588"/>
    </location>
</feature>
<feature type="strand" evidence="15">
    <location>
        <begin position="592"/>
        <end position="597"/>
    </location>
</feature>
<feature type="strand" evidence="15">
    <location>
        <begin position="601"/>
        <end position="606"/>
    </location>
</feature>
<feature type="strand" evidence="15">
    <location>
        <begin position="609"/>
        <end position="612"/>
    </location>
</feature>
<feature type="strand" evidence="15">
    <location>
        <begin position="620"/>
        <end position="629"/>
    </location>
</feature>
<feature type="strand" evidence="16">
    <location>
        <begin position="636"/>
        <end position="638"/>
    </location>
</feature>
<feature type="strand" evidence="15">
    <location>
        <begin position="645"/>
        <end position="651"/>
    </location>
</feature>
<feature type="strand" evidence="19">
    <location>
        <begin position="653"/>
        <end position="655"/>
    </location>
</feature>
<feature type="strand" evidence="16">
    <location>
        <begin position="657"/>
        <end position="659"/>
    </location>
</feature>
<feature type="strand" evidence="16">
    <location>
        <begin position="662"/>
        <end position="664"/>
    </location>
</feature>
<feature type="strand" evidence="15">
    <location>
        <begin position="666"/>
        <end position="671"/>
    </location>
</feature>
<feature type="strand" evidence="15">
    <location>
        <begin position="678"/>
        <end position="680"/>
    </location>
</feature>
<feature type="turn" evidence="15">
    <location>
        <begin position="684"/>
        <end position="687"/>
    </location>
</feature>
<feature type="strand" evidence="19">
    <location>
        <begin position="688"/>
        <end position="691"/>
    </location>
</feature>
<feature type="strand" evidence="15">
    <location>
        <begin position="692"/>
        <end position="695"/>
    </location>
</feature>
<feature type="strand" evidence="15">
    <location>
        <begin position="703"/>
        <end position="707"/>
    </location>
</feature>
<feature type="strand" evidence="15">
    <location>
        <begin position="710"/>
        <end position="712"/>
    </location>
</feature>
<feature type="strand" evidence="15">
    <location>
        <begin position="716"/>
        <end position="718"/>
    </location>
</feature>
<feature type="helix" evidence="15">
    <location>
        <begin position="721"/>
        <end position="728"/>
    </location>
</feature>
<feature type="strand" evidence="20">
    <location>
        <begin position="804"/>
        <end position="806"/>
    </location>
</feature>
<feature type="helix" evidence="20">
    <location>
        <begin position="811"/>
        <end position="813"/>
    </location>
</feature>
<proteinExistence type="evidence at protein level"/>
<accession>P22216</accession>
<accession>D6W3L5</accession>
<accession>Q6B1S1</accession>
<dbReference type="EC" id="2.7.12.1"/>
<dbReference type="EMBL" id="M55623">
    <property type="protein sequence ID" value="AAA35070.1"/>
    <property type="molecule type" value="Genomic_DNA"/>
</dbReference>
<dbReference type="EMBL" id="X96770">
    <property type="protein sequence ID" value="CAA65568.1"/>
    <property type="molecule type" value="Genomic_DNA"/>
</dbReference>
<dbReference type="EMBL" id="Z73509">
    <property type="protein sequence ID" value="CAA97858.1"/>
    <property type="molecule type" value="Genomic_DNA"/>
</dbReference>
<dbReference type="EMBL" id="AY693009">
    <property type="protein sequence ID" value="AAT93028.1"/>
    <property type="molecule type" value="Genomic_DNA"/>
</dbReference>
<dbReference type="EMBL" id="BK006949">
    <property type="protein sequence ID" value="DAA11281.1"/>
    <property type="molecule type" value="Genomic_DNA"/>
</dbReference>
<dbReference type="PIR" id="A39616">
    <property type="entry name" value="A39616"/>
</dbReference>
<dbReference type="RefSeq" id="NP_015172.1">
    <property type="nucleotide sequence ID" value="NM_001183967.1"/>
</dbReference>
<dbReference type="PDB" id="1DMZ">
    <property type="method" value="NMR"/>
    <property type="chains" value="A=573-730"/>
</dbReference>
<dbReference type="PDB" id="1FHQ">
    <property type="method" value="NMR"/>
    <property type="chains" value="A=573-730"/>
</dbReference>
<dbReference type="PDB" id="1FHR">
    <property type="method" value="NMR"/>
    <property type="chains" value="A=573-730"/>
</dbReference>
<dbReference type="PDB" id="1G3G">
    <property type="method" value="NMR"/>
    <property type="chains" value="A=1-164"/>
</dbReference>
<dbReference type="PDB" id="1G6G">
    <property type="method" value="X-ray"/>
    <property type="resolution" value="1.60 A"/>
    <property type="chains" value="A/B=29-155"/>
</dbReference>
<dbReference type="PDB" id="1J4K">
    <property type="method" value="NMR"/>
    <property type="chains" value="A=573-730"/>
</dbReference>
<dbReference type="PDB" id="1J4L">
    <property type="method" value="NMR"/>
    <property type="chains" value="A=573-730"/>
</dbReference>
<dbReference type="PDB" id="1J4O">
    <property type="method" value="NMR"/>
    <property type="chains" value="A=14-164"/>
</dbReference>
<dbReference type="PDB" id="1J4P">
    <property type="method" value="NMR"/>
    <property type="chains" value="A=14-164"/>
</dbReference>
<dbReference type="PDB" id="1J4Q">
    <property type="method" value="NMR"/>
    <property type="chains" value="A=14-164"/>
</dbReference>
<dbReference type="PDB" id="1K2M">
    <property type="method" value="NMR"/>
    <property type="chains" value="A=573-730"/>
</dbReference>
<dbReference type="PDB" id="1K2N">
    <property type="method" value="NMR"/>
    <property type="chains" value="A=573-730"/>
</dbReference>
<dbReference type="PDB" id="1K3J">
    <property type="method" value="NMR"/>
    <property type="chains" value="A=14-164"/>
</dbReference>
<dbReference type="PDB" id="1K3N">
    <property type="method" value="NMR"/>
    <property type="chains" value="A=14-164"/>
</dbReference>
<dbReference type="PDB" id="1K3Q">
    <property type="method" value="NMR"/>
    <property type="chains" value="A=14-164"/>
</dbReference>
<dbReference type="PDB" id="1QU5">
    <property type="method" value="NMR"/>
    <property type="chains" value="A=549-730"/>
</dbReference>
<dbReference type="PDB" id="2A0T">
    <property type="method" value="NMR"/>
    <property type="chains" value="A=14-164"/>
</dbReference>
<dbReference type="PDB" id="2JQI">
    <property type="method" value="NMR"/>
    <property type="chains" value="A=14-164, B=3-12"/>
</dbReference>
<dbReference type="PDB" id="2JQL">
    <property type="method" value="NMR"/>
    <property type="chains" value="B=3-12"/>
</dbReference>
<dbReference type="PDB" id="2YGV">
    <property type="method" value="X-ray"/>
    <property type="resolution" value="2.94 A"/>
    <property type="chains" value="E/F/G/H=800-821"/>
</dbReference>
<dbReference type="PDB" id="4PDP">
    <property type="method" value="X-ray"/>
    <property type="resolution" value="2.59 A"/>
    <property type="chains" value="A/B=170-512"/>
</dbReference>
<dbReference type="PDB" id="4PDS">
    <property type="method" value="X-ray"/>
    <property type="resolution" value="2.90 A"/>
    <property type="chains" value="A/B=170-512"/>
</dbReference>
<dbReference type="PDB" id="5T2F">
    <property type="method" value="X-ray"/>
    <property type="resolution" value="2.66 A"/>
    <property type="chains" value="A/B/C/D=22-162"/>
</dbReference>
<dbReference type="PDB" id="5T2S">
    <property type="method" value="X-ray"/>
    <property type="resolution" value="2.40 A"/>
    <property type="chains" value="A/C=22-162"/>
</dbReference>
<dbReference type="PDB" id="5XZV">
    <property type="method" value="X-ray"/>
    <property type="resolution" value="3.10 A"/>
    <property type="chains" value="A/B=1-466"/>
</dbReference>
<dbReference type="PDB" id="5XZW">
    <property type="method" value="X-ray"/>
    <property type="resolution" value="2.80 A"/>
    <property type="chains" value="A/B=1-466"/>
</dbReference>
<dbReference type="PDB" id="6C4U">
    <property type="method" value="X-ray"/>
    <property type="resolution" value="2.60 A"/>
    <property type="chains" value="A/B/C/D/E/F=29-162"/>
</dbReference>
<dbReference type="PDBsum" id="1DMZ"/>
<dbReference type="PDBsum" id="1FHQ"/>
<dbReference type="PDBsum" id="1FHR"/>
<dbReference type="PDBsum" id="1G3G"/>
<dbReference type="PDBsum" id="1G6G"/>
<dbReference type="PDBsum" id="1J4K"/>
<dbReference type="PDBsum" id="1J4L"/>
<dbReference type="PDBsum" id="1J4O"/>
<dbReference type="PDBsum" id="1J4P"/>
<dbReference type="PDBsum" id="1J4Q"/>
<dbReference type="PDBsum" id="1K2M"/>
<dbReference type="PDBsum" id="1K2N"/>
<dbReference type="PDBsum" id="1K3J"/>
<dbReference type="PDBsum" id="1K3N"/>
<dbReference type="PDBsum" id="1K3Q"/>
<dbReference type="PDBsum" id="1QU5"/>
<dbReference type="PDBsum" id="2A0T"/>
<dbReference type="PDBsum" id="2JQI"/>
<dbReference type="PDBsum" id="2JQL"/>
<dbReference type="PDBsum" id="2YGV"/>
<dbReference type="PDBsum" id="4PDP"/>
<dbReference type="PDBsum" id="4PDS"/>
<dbReference type="PDBsum" id="5T2F"/>
<dbReference type="PDBsum" id="5T2S"/>
<dbReference type="PDBsum" id="5XZV"/>
<dbReference type="PDBsum" id="5XZW"/>
<dbReference type="PDBsum" id="6C4U"/>
<dbReference type="SMR" id="P22216"/>
<dbReference type="BioGRID" id="36030">
    <property type="interactions" value="781"/>
</dbReference>
<dbReference type="ComplexPortal" id="CPX-1322">
    <property type="entry name" value="RAD53-ASF1 complex"/>
</dbReference>
<dbReference type="DIP" id="DIP-2322N"/>
<dbReference type="FunCoup" id="P22216">
    <property type="interactions" value="642"/>
</dbReference>
<dbReference type="IntAct" id="P22216">
    <property type="interactions" value="42"/>
</dbReference>
<dbReference type="MINT" id="P22216"/>
<dbReference type="STRING" id="4932.YPL153C"/>
<dbReference type="iPTMnet" id="P22216"/>
<dbReference type="PaxDb" id="4932-YPL153C"/>
<dbReference type="PeptideAtlas" id="P22216"/>
<dbReference type="EnsemblFungi" id="YPL153C_mRNA">
    <property type="protein sequence ID" value="YPL153C"/>
    <property type="gene ID" value="YPL153C"/>
</dbReference>
<dbReference type="GeneID" id="855950"/>
<dbReference type="KEGG" id="sce:YPL153C"/>
<dbReference type="AGR" id="SGD:S000006074"/>
<dbReference type="SGD" id="S000006074">
    <property type="gene designation" value="RAD53"/>
</dbReference>
<dbReference type="VEuPathDB" id="FungiDB:YPL153C"/>
<dbReference type="eggNOG" id="KOG0615">
    <property type="taxonomic scope" value="Eukaryota"/>
</dbReference>
<dbReference type="HOGENOM" id="CLU_379543_0_0_1"/>
<dbReference type="InParanoid" id="P22216"/>
<dbReference type="OMA" id="HEGPLKD"/>
<dbReference type="OrthoDB" id="10252171at2759"/>
<dbReference type="BioCyc" id="YEAST:G3O-34050-MONOMER"/>
<dbReference type="BRENDA" id="2.7.12.1">
    <property type="organism ID" value="984"/>
</dbReference>
<dbReference type="BioGRID-ORCS" id="855950">
    <property type="hits" value="7 hits in 13 CRISPR screens"/>
</dbReference>
<dbReference type="EvolutionaryTrace" id="P22216"/>
<dbReference type="PRO" id="PR:P22216"/>
<dbReference type="Proteomes" id="UP000002311">
    <property type="component" value="Chromosome XVI"/>
</dbReference>
<dbReference type="RNAct" id="P22216">
    <property type="molecule type" value="protein"/>
</dbReference>
<dbReference type="GO" id="GO:0005737">
    <property type="term" value="C:cytoplasm"/>
    <property type="evidence" value="ECO:0000318"/>
    <property type="project" value="GO_Central"/>
</dbReference>
<dbReference type="GO" id="GO:0005829">
    <property type="term" value="C:cytosol"/>
    <property type="evidence" value="ECO:0000314"/>
    <property type="project" value="SGD"/>
</dbReference>
<dbReference type="GO" id="GO:0005634">
    <property type="term" value="C:nucleus"/>
    <property type="evidence" value="ECO:0000314"/>
    <property type="project" value="SGD"/>
</dbReference>
<dbReference type="GO" id="GO:0005524">
    <property type="term" value="F:ATP binding"/>
    <property type="evidence" value="ECO:0007669"/>
    <property type="project" value="UniProtKB-KW"/>
</dbReference>
<dbReference type="GO" id="GO:0003688">
    <property type="term" value="F:DNA replication origin binding"/>
    <property type="evidence" value="ECO:0000314"/>
    <property type="project" value="SGD"/>
</dbReference>
<dbReference type="GO" id="GO:0004672">
    <property type="term" value="F:protein kinase activity"/>
    <property type="evidence" value="ECO:0007005"/>
    <property type="project" value="SGD"/>
</dbReference>
<dbReference type="GO" id="GO:0106310">
    <property type="term" value="F:protein serine kinase activity"/>
    <property type="evidence" value="ECO:0007669"/>
    <property type="project" value="RHEA"/>
</dbReference>
<dbReference type="GO" id="GO:0004674">
    <property type="term" value="F:protein serine/threonine kinase activity"/>
    <property type="evidence" value="ECO:0000318"/>
    <property type="project" value="GO_Central"/>
</dbReference>
<dbReference type="GO" id="GO:0004712">
    <property type="term" value="F:protein serine/threonine/tyrosine kinase activity"/>
    <property type="evidence" value="ECO:0000314"/>
    <property type="project" value="SGD"/>
</dbReference>
<dbReference type="GO" id="GO:0004713">
    <property type="term" value="F:protein tyrosine kinase activity"/>
    <property type="evidence" value="ECO:0007669"/>
    <property type="project" value="UniProtKB-KW"/>
</dbReference>
<dbReference type="GO" id="GO:0009202">
    <property type="term" value="P:deoxyribonucleoside triphosphate biosynthetic process"/>
    <property type="evidence" value="ECO:0000315"/>
    <property type="project" value="SGD"/>
</dbReference>
<dbReference type="GO" id="GO:0000077">
    <property type="term" value="P:DNA damage checkpoint signaling"/>
    <property type="evidence" value="ECO:0000316"/>
    <property type="project" value="SGD"/>
</dbReference>
<dbReference type="GO" id="GO:0006281">
    <property type="term" value="P:DNA repair"/>
    <property type="evidence" value="ECO:0000315"/>
    <property type="project" value="SGD"/>
</dbReference>
<dbReference type="GO" id="GO:0006270">
    <property type="term" value="P:DNA replication initiation"/>
    <property type="evidence" value="ECO:0000315"/>
    <property type="project" value="SGD"/>
</dbReference>
<dbReference type="GO" id="GO:0051598">
    <property type="term" value="P:meiotic recombination checkpoint signaling"/>
    <property type="evidence" value="ECO:0000318"/>
    <property type="project" value="GO_Central"/>
</dbReference>
<dbReference type="GO" id="GO:2000002">
    <property type="term" value="P:negative regulation of DNA damage checkpoint"/>
    <property type="evidence" value="ECO:0000303"/>
    <property type="project" value="ComplexPortal"/>
</dbReference>
<dbReference type="GO" id="GO:0008104">
    <property type="term" value="P:protein localization"/>
    <property type="evidence" value="ECO:0000315"/>
    <property type="project" value="SGD"/>
</dbReference>
<dbReference type="GO" id="GO:0006282">
    <property type="term" value="P:regulation of DNA repair"/>
    <property type="evidence" value="ECO:0000303"/>
    <property type="project" value="ComplexPortal"/>
</dbReference>
<dbReference type="GO" id="GO:0043247">
    <property type="term" value="P:telomere maintenance in response to DNA damage"/>
    <property type="evidence" value="ECO:0000315"/>
    <property type="project" value="SGD"/>
</dbReference>
<dbReference type="CDD" id="cd22689">
    <property type="entry name" value="FHA_RAD53-like_rpt1"/>
    <property type="match status" value="1"/>
</dbReference>
<dbReference type="CDD" id="cd22690">
    <property type="entry name" value="FHA_RAD53-like_rpt2"/>
    <property type="match status" value="1"/>
</dbReference>
<dbReference type="CDD" id="cd14098">
    <property type="entry name" value="STKc_Rad53_Cds1"/>
    <property type="match status" value="1"/>
</dbReference>
<dbReference type="DisProt" id="DP01182"/>
<dbReference type="FunFam" id="1.10.510.10:FF:000651">
    <property type="entry name" value="Serine/threonine-protein kinase RAD53"/>
    <property type="match status" value="1"/>
</dbReference>
<dbReference type="FunFam" id="2.60.200.20:FF:000062">
    <property type="entry name" value="Serine/threonine-protein kinase RAD53"/>
    <property type="match status" value="1"/>
</dbReference>
<dbReference type="FunFam" id="2.60.200.20:FF:000104">
    <property type="entry name" value="Serine/threonine-protein kinase RAD53"/>
    <property type="match status" value="1"/>
</dbReference>
<dbReference type="FunFam" id="3.30.200.20:FF:000699">
    <property type="entry name" value="Serine/threonine-protein kinase RAD53"/>
    <property type="match status" value="1"/>
</dbReference>
<dbReference type="Gene3D" id="2.60.200.20">
    <property type="match status" value="2"/>
</dbReference>
<dbReference type="Gene3D" id="3.30.200.20">
    <property type="entry name" value="Phosphorylase Kinase, domain 1"/>
    <property type="match status" value="1"/>
</dbReference>
<dbReference type="Gene3D" id="1.10.510.10">
    <property type="entry name" value="Transferase(Phosphotransferase) domain 1"/>
    <property type="match status" value="1"/>
</dbReference>
<dbReference type="IDEAL" id="IID50168"/>
<dbReference type="InterPro" id="IPR030616">
    <property type="entry name" value="Aur-like"/>
</dbReference>
<dbReference type="InterPro" id="IPR000253">
    <property type="entry name" value="FHA_dom"/>
</dbReference>
<dbReference type="InterPro" id="IPR011009">
    <property type="entry name" value="Kinase-like_dom_sf"/>
</dbReference>
<dbReference type="InterPro" id="IPR000719">
    <property type="entry name" value="Prot_kinase_dom"/>
</dbReference>
<dbReference type="InterPro" id="IPR017441">
    <property type="entry name" value="Protein_kinase_ATP_BS"/>
</dbReference>
<dbReference type="InterPro" id="IPR008271">
    <property type="entry name" value="Ser/Thr_kinase_AS"/>
</dbReference>
<dbReference type="InterPro" id="IPR016256">
    <property type="entry name" value="Ser/Thr_kinase_Rad53"/>
</dbReference>
<dbReference type="InterPro" id="IPR008984">
    <property type="entry name" value="SMAD_FHA_dom_sf"/>
</dbReference>
<dbReference type="PANTHER" id="PTHR24350">
    <property type="entry name" value="SERINE/THREONINE-PROTEIN KINASE IAL-RELATED"/>
    <property type="match status" value="1"/>
</dbReference>
<dbReference type="Pfam" id="PF00498">
    <property type="entry name" value="FHA"/>
    <property type="match status" value="2"/>
</dbReference>
<dbReference type="Pfam" id="PF00069">
    <property type="entry name" value="Pkinase"/>
    <property type="match status" value="1"/>
</dbReference>
<dbReference type="PIRSF" id="PIRSF000661">
    <property type="entry name" value="Ser/Thr_PK_RAD53"/>
    <property type="match status" value="1"/>
</dbReference>
<dbReference type="SMART" id="SM00240">
    <property type="entry name" value="FHA"/>
    <property type="match status" value="2"/>
</dbReference>
<dbReference type="SMART" id="SM00220">
    <property type="entry name" value="S_TKc"/>
    <property type="match status" value="1"/>
</dbReference>
<dbReference type="SUPFAM" id="SSF56112">
    <property type="entry name" value="Protein kinase-like (PK-like)"/>
    <property type="match status" value="1"/>
</dbReference>
<dbReference type="SUPFAM" id="SSF49879">
    <property type="entry name" value="SMAD/FHA domain"/>
    <property type="match status" value="2"/>
</dbReference>
<dbReference type="PROSITE" id="PS50006">
    <property type="entry name" value="FHA_DOMAIN"/>
    <property type="match status" value="2"/>
</dbReference>
<dbReference type="PROSITE" id="PS00107">
    <property type="entry name" value="PROTEIN_KINASE_ATP"/>
    <property type="match status" value="1"/>
</dbReference>
<dbReference type="PROSITE" id="PS50011">
    <property type="entry name" value="PROTEIN_KINASE_DOM"/>
    <property type="match status" value="1"/>
</dbReference>
<dbReference type="PROSITE" id="PS00108">
    <property type="entry name" value="PROTEIN_KINASE_ST"/>
    <property type="match status" value="1"/>
</dbReference>
<name>RAD53_YEAST</name>
<reference key="1">
    <citation type="journal article" date="1991" name="Mol. Cell. Biol.">
        <title>Spk1, a new kinase from Saccharomyces cerevisiae, phosphorylates proteins on serine, threonine, and tyrosine.</title>
        <authorList>
            <person name="Stern D.F."/>
            <person name="Zheng P."/>
            <person name="Beidler D.R."/>
            <person name="Zerillo C."/>
        </authorList>
    </citation>
    <scope>NUCLEOTIDE SEQUENCE [GENOMIC DNA]</scope>
</reference>
<reference key="2">
    <citation type="journal article" date="1996" name="Yeast">
        <title>The sequence of 55 kb on the left arm of yeast chromosome XVI identifies a small nuclear RNA, a new putative protein kinase and two new putative regulators.</title>
        <authorList>
            <person name="Purnelle B."/>
            <person name="Coster F."/>
            <person name="Goffeau A."/>
        </authorList>
    </citation>
    <scope>NUCLEOTIDE SEQUENCE [GENOMIC DNA]</scope>
    <source>
        <strain>ATCC 204511 / S288c / AB972</strain>
    </source>
</reference>
<reference key="3">
    <citation type="journal article" date="1997" name="Nature">
        <title>The nucleotide sequence of Saccharomyces cerevisiae chromosome XVI.</title>
        <authorList>
            <person name="Bussey H."/>
            <person name="Storms R.K."/>
            <person name="Ahmed A."/>
            <person name="Albermann K."/>
            <person name="Allen E."/>
            <person name="Ansorge W."/>
            <person name="Araujo R."/>
            <person name="Aparicio A."/>
            <person name="Barrell B.G."/>
            <person name="Badcock K."/>
            <person name="Benes V."/>
            <person name="Botstein D."/>
            <person name="Bowman S."/>
            <person name="Brueckner M."/>
            <person name="Carpenter J."/>
            <person name="Cherry J.M."/>
            <person name="Chung E."/>
            <person name="Churcher C.M."/>
            <person name="Coster F."/>
            <person name="Davis K."/>
            <person name="Davis R.W."/>
            <person name="Dietrich F.S."/>
            <person name="Delius H."/>
            <person name="DiPaolo T."/>
            <person name="Dubois E."/>
            <person name="Duesterhoeft A."/>
            <person name="Duncan M."/>
            <person name="Floeth M."/>
            <person name="Fortin N."/>
            <person name="Friesen J.D."/>
            <person name="Fritz C."/>
            <person name="Goffeau A."/>
            <person name="Hall J."/>
            <person name="Hebling U."/>
            <person name="Heumann K."/>
            <person name="Hilbert H."/>
            <person name="Hillier L.W."/>
            <person name="Hunicke-Smith S."/>
            <person name="Hyman R.W."/>
            <person name="Johnston M."/>
            <person name="Kalman S."/>
            <person name="Kleine K."/>
            <person name="Komp C."/>
            <person name="Kurdi O."/>
            <person name="Lashkari D."/>
            <person name="Lew H."/>
            <person name="Lin A."/>
            <person name="Lin D."/>
            <person name="Louis E.J."/>
            <person name="Marathe R."/>
            <person name="Messenguy F."/>
            <person name="Mewes H.-W."/>
            <person name="Mirtipati S."/>
            <person name="Moestl D."/>
            <person name="Mueller-Auer S."/>
            <person name="Namath A."/>
            <person name="Nentwich U."/>
            <person name="Oefner P."/>
            <person name="Pearson D."/>
            <person name="Petel F.X."/>
            <person name="Pohl T.M."/>
            <person name="Purnelle B."/>
            <person name="Rajandream M.A."/>
            <person name="Rechmann S."/>
            <person name="Rieger M."/>
            <person name="Riles L."/>
            <person name="Roberts D."/>
            <person name="Schaefer M."/>
            <person name="Scharfe M."/>
            <person name="Scherens B."/>
            <person name="Schramm S."/>
            <person name="Schroeder M."/>
            <person name="Sdicu A.-M."/>
            <person name="Tettelin H."/>
            <person name="Urrestarazu L.A."/>
            <person name="Ushinsky S."/>
            <person name="Vierendeels F."/>
            <person name="Vissers S."/>
            <person name="Voss H."/>
            <person name="Walsh S.V."/>
            <person name="Wambutt R."/>
            <person name="Wang Y."/>
            <person name="Wedler E."/>
            <person name="Wedler H."/>
            <person name="Winnett E."/>
            <person name="Zhong W.-W."/>
            <person name="Zollner A."/>
            <person name="Vo D.H."/>
            <person name="Hani J."/>
        </authorList>
    </citation>
    <scope>NUCLEOTIDE SEQUENCE [LARGE SCALE GENOMIC DNA]</scope>
    <source>
        <strain>ATCC 204508 / S288c</strain>
    </source>
</reference>
<reference key="4">
    <citation type="journal article" date="2014" name="G3 (Bethesda)">
        <title>The reference genome sequence of Saccharomyces cerevisiae: Then and now.</title>
        <authorList>
            <person name="Engel S.R."/>
            <person name="Dietrich F.S."/>
            <person name="Fisk D.G."/>
            <person name="Binkley G."/>
            <person name="Balakrishnan R."/>
            <person name="Costanzo M.C."/>
            <person name="Dwight S.S."/>
            <person name="Hitz B.C."/>
            <person name="Karra K."/>
            <person name="Nash R.S."/>
            <person name="Weng S."/>
            <person name="Wong E.D."/>
            <person name="Lloyd P."/>
            <person name="Skrzypek M.S."/>
            <person name="Miyasato S.R."/>
            <person name="Simison M."/>
            <person name="Cherry J.M."/>
        </authorList>
    </citation>
    <scope>GENOME REANNOTATION</scope>
    <source>
        <strain>ATCC 204508 / S288c</strain>
    </source>
</reference>
<reference key="5">
    <citation type="journal article" date="2007" name="Genome Res.">
        <title>Approaching a complete repository of sequence-verified protein-encoding clones for Saccharomyces cerevisiae.</title>
        <authorList>
            <person name="Hu Y."/>
            <person name="Rolfs A."/>
            <person name="Bhullar B."/>
            <person name="Murthy T.V.S."/>
            <person name="Zhu C."/>
            <person name="Berger M.F."/>
            <person name="Camargo A.A."/>
            <person name="Kelley F."/>
            <person name="McCarron S."/>
            <person name="Jepson D."/>
            <person name="Richardson A."/>
            <person name="Raphael J."/>
            <person name="Moreira D."/>
            <person name="Taycher E."/>
            <person name="Zuo D."/>
            <person name="Mohr S."/>
            <person name="Kane M.F."/>
            <person name="Williamson J."/>
            <person name="Simpson A.J.G."/>
            <person name="Bulyk M.L."/>
            <person name="Harlow E."/>
            <person name="Marsischky G."/>
            <person name="Kolodner R.D."/>
            <person name="LaBaer J."/>
        </authorList>
    </citation>
    <scope>NUCLEOTIDE SEQUENCE [GENOMIC DNA]</scope>
    <source>
        <strain>ATCC 204508 / S288c</strain>
    </source>
</reference>
<reference key="6">
    <citation type="journal article" date="1993" name="Mol. Cell. Biol.">
        <title>SPK1 is an essential S-phase-specific gene of Saccharomyces cerevisiae that encodes a nuclear serine/threonine/tyrosine kinase.</title>
        <authorList>
            <person name="Zheng P."/>
            <person name="Fay D.S."/>
            <person name="Burton J."/>
            <person name="Xiao H."/>
            <person name="Pinkham J.L."/>
            <person name="Stern D.F."/>
        </authorList>
    </citation>
    <scope>FUNCTION</scope>
    <scope>SUBCELLULAR LOCATION</scope>
</reference>
<reference key="7">
    <citation type="journal article" date="1994" name="Genes Dev.">
        <title>The SAD1/RAD53 protein kinase controls multiple checkpoints and DNA damage-induced transcription in yeast.</title>
        <authorList>
            <person name="Allen J.B."/>
            <person name="Zhou Z."/>
            <person name="Siede W."/>
            <person name="Friedberg E.C."/>
            <person name="Elledge S.J."/>
        </authorList>
    </citation>
    <scope>FUNCTION</scope>
</reference>
<reference key="8">
    <citation type="journal article" date="1999" name="EMBO J.">
        <title>Activation of Rad53 kinase in response to DNA damage and its effect in modulating phosphorylation of the lagging strand DNA polymerase.</title>
        <authorList>
            <person name="Pellicioli A."/>
            <person name="Lucca C."/>
            <person name="Liberi G."/>
            <person name="Marini F."/>
            <person name="Lopes M."/>
            <person name="Plevani P."/>
            <person name="Romano A."/>
            <person name="Di Fiore P.P."/>
            <person name="Foiani M."/>
        </authorList>
    </citation>
    <scope>PHOSPHORYLATION</scope>
</reference>
<reference key="9">
    <citation type="journal article" date="1999" name="Science">
        <title>Control of the DNA damage checkpoint by chk1 and rad53 protein kinases through distinct mechanisms.</title>
        <authorList>
            <person name="Sanchez Y."/>
            <person name="Bachant J."/>
            <person name="Wang H."/>
            <person name="Hu F."/>
            <person name="Liu D."/>
            <person name="Tetzlaff M."/>
            <person name="Elledge S.J."/>
        </authorList>
    </citation>
    <scope>FUNCTION</scope>
</reference>
<reference key="10">
    <citation type="journal article" date="2002" name="Nucleic Acids Res.">
        <title>Phosphorylation of Rph1, a damage-responsive repressor of PHR1 in Saccharomyces cerevisiae, is dependent upon Rad53 kinase.</title>
        <authorList>
            <person name="Kim E.M."/>
            <person name="Jang Y.K."/>
            <person name="Park S.D."/>
        </authorList>
    </citation>
    <scope>FUNCTION IN PHOSPHORYLATION OF RPH1</scope>
</reference>
<reference key="11">
    <citation type="journal article" date="2003" name="Mol. Cell">
        <title>PP2C phosphatases Ptc2 and Ptc3 are required for DNA checkpoint inactivation after a double-strand break.</title>
        <authorList>
            <person name="Leroy C."/>
            <person name="Lee S.E."/>
            <person name="Vaze M.B."/>
            <person name="Ochsenbein F."/>
            <person name="Guerois R."/>
            <person name="Haber J.E."/>
            <person name="Marsolier-Kergoat M.C."/>
        </authorList>
    </citation>
    <scope>ACTIVITY REGULATION</scope>
    <scope>INTERACTION WITH PTC2</scope>
    <scope>PHOSPHORYLATION</scope>
    <scope>MUTAGENESIS OF ARG-70 AND SER-85</scope>
</reference>
<reference key="12">
    <citation type="journal article" date="2003" name="Mol. Cell">
        <authorList>
            <person name="Leroy C."/>
            <person name="Lee S.E."/>
            <person name="Vaze M.B."/>
            <person name="Ochsenbein F."/>
            <person name="Guerois R."/>
            <person name="Haber J.E."/>
            <person name="Marsolier-Kergoat M.C."/>
        </authorList>
    </citation>
    <scope>ERRATUM OF PUBMED:12667463</scope>
</reference>
<reference key="13">
    <citation type="journal article" date="2003" name="Nature">
        <title>Global analysis of protein expression in yeast.</title>
        <authorList>
            <person name="Ghaemmaghami S."/>
            <person name="Huh W.-K."/>
            <person name="Bower K."/>
            <person name="Howson R.W."/>
            <person name="Belle A."/>
            <person name="Dephoure N."/>
            <person name="O'Shea E.K."/>
            <person name="Weissman J.S."/>
        </authorList>
    </citation>
    <scope>LEVEL OF PROTEIN EXPRESSION [LARGE SCALE ANALYSIS]</scope>
</reference>
<reference key="14">
    <citation type="journal article" date="2004" name="Mol. Cell. Biol.">
        <title>Mdt1, a novel Rad53 FHA1 domain-interacting protein, modulates DNA damage tolerance and G(2)/M cell cycle progression in Saccharomyces cerevisiae.</title>
        <authorList>
            <person name="Pike B.L."/>
            <person name="Yongkiettrakul S."/>
            <person name="Tsai M.-D."/>
            <person name="Heierhorst J."/>
        </authorList>
    </citation>
    <scope>FUNCTION</scope>
    <scope>INTERACTION WITH PIN4</scope>
</reference>
<reference key="15">
    <citation type="journal article" date="2007" name="Proc. Natl. Acad. Sci. U.S.A.">
        <title>Analysis of phosphorylation sites on proteins from Saccharomyces cerevisiae by electron transfer dissociation (ETD) mass spectrometry.</title>
        <authorList>
            <person name="Chi A."/>
            <person name="Huttenhower C."/>
            <person name="Geer L.Y."/>
            <person name="Coon J.J."/>
            <person name="Syka J.E.P."/>
            <person name="Bai D.L."/>
            <person name="Shabanowitz J."/>
            <person name="Burke D.J."/>
            <person name="Troyanskaya O.G."/>
            <person name="Hunt D.F."/>
        </authorList>
    </citation>
    <scope>IDENTIFICATION BY MASS SPECTROMETRY [LARGE SCALE ANALYSIS]</scope>
</reference>
<reference key="16">
    <citation type="journal article" date="2008" name="Mol. Cell. Proteomics">
        <title>A multidimensional chromatography technology for in-depth phosphoproteome analysis.</title>
        <authorList>
            <person name="Albuquerque C.P."/>
            <person name="Smolka M.B."/>
            <person name="Payne S.H."/>
            <person name="Bafna V."/>
            <person name="Eng J."/>
            <person name="Zhou H."/>
        </authorList>
    </citation>
    <scope>PHOSPHORYLATION [LARGE SCALE ANALYSIS] AT SER-24; SER-175; SER-547; SER-560; SER-774 AND SER-793</scope>
    <scope>IDENTIFICATION BY MASS SPECTROMETRY [LARGE SCALE ANALYSIS]</scope>
</reference>
<reference key="17">
    <citation type="journal article" date="2009" name="Science">
        <title>Global analysis of Cdk1 substrate phosphorylation sites provides insights into evolution.</title>
        <authorList>
            <person name="Holt L.J."/>
            <person name="Tuch B.B."/>
            <person name="Villen J."/>
            <person name="Johnson A.D."/>
            <person name="Gygi S.P."/>
            <person name="Morgan D.O."/>
        </authorList>
    </citation>
    <scope>PHOSPHORYLATION [LARGE SCALE ANALYSIS] AT SER-774</scope>
    <scope>IDENTIFICATION BY MASS SPECTROMETRY [LARGE SCALE ANALYSIS]</scope>
</reference>
<reference key="18">
    <citation type="journal article" date="2012" name="Proc. Natl. Acad. Sci. U.S.A.">
        <title>N-terminal acetylome analyses and functional insights of the N-terminal acetyltransferase NatB.</title>
        <authorList>
            <person name="Van Damme P."/>
            <person name="Lasa M."/>
            <person name="Polevoda B."/>
            <person name="Gazquez C."/>
            <person name="Elosegui-Artola A."/>
            <person name="Kim D.S."/>
            <person name="De Juan-Pardo E."/>
            <person name="Demeyer K."/>
            <person name="Hole K."/>
            <person name="Larrea E."/>
            <person name="Timmerman E."/>
            <person name="Prieto J."/>
            <person name="Arnesen T."/>
            <person name="Sherman F."/>
            <person name="Gevaert K."/>
            <person name="Aldabe R."/>
        </authorList>
    </citation>
    <scope>IDENTIFICATION BY MASS SPECTROMETRY [LARGE SCALE ANALYSIS]</scope>
</reference>
<reference key="19">
    <citation type="journal article" date="1999" name="J. Mol. Biol.">
        <title>Structure and function of a new phosphopeptide-binding domain containing the FHA2 of Rad53.</title>
        <authorList>
            <person name="Liao H."/>
            <person name="Byeon I.-J.L."/>
            <person name="Tsai M.-D."/>
        </authorList>
    </citation>
    <scope>STRUCTURE BY NMR OF 573-730</scope>
</reference>
<reference key="20">
    <citation type="journal article" date="2000" name="J. Mol. Biol.">
        <title>Structure of the FHA1 domain of yeast Rad53 and identification of binding sites for both FHA1 and its target protein Rad9.</title>
        <authorList>
            <person name="Liao H."/>
            <person name="Yuan C."/>
            <person name="Su M.I."/>
            <person name="Yongkiettrakul S."/>
            <person name="Qin D."/>
            <person name="Li H."/>
            <person name="Byeon I.J."/>
            <person name="Pei D."/>
            <person name="Tsai M.D."/>
        </authorList>
    </citation>
    <scope>STRUCTURE BY NMR OF 2-164</scope>
</reference>
<reference key="21">
    <citation type="journal article" date="2000" name="Mol. Cell">
        <title>The molecular basis of FHA domain:phosphopeptide binding specificity and implications for phospho-dependent signaling mechanisms.</title>
        <authorList>
            <person name="Durocher D."/>
            <person name="Taylor I.A."/>
            <person name="Sarbassova D."/>
            <person name="Haire L.F."/>
            <person name="Westcott S.L."/>
            <person name="Jackson S.P."/>
            <person name="Smerdon S.J."/>
            <person name="Yaffe M.B."/>
        </authorList>
    </citation>
    <scope>X-RAY CRYSTALLOGRAPHY (1.6 ANGSTROMS) OF 29-155</scope>
</reference>
<organism>
    <name type="scientific">Saccharomyces cerevisiae (strain ATCC 204508 / S288c)</name>
    <name type="common">Baker's yeast</name>
    <dbReference type="NCBI Taxonomy" id="559292"/>
    <lineage>
        <taxon>Eukaryota</taxon>
        <taxon>Fungi</taxon>
        <taxon>Dikarya</taxon>
        <taxon>Ascomycota</taxon>
        <taxon>Saccharomycotina</taxon>
        <taxon>Saccharomycetes</taxon>
        <taxon>Saccharomycetales</taxon>
        <taxon>Saccharomycetaceae</taxon>
        <taxon>Saccharomyces</taxon>
    </lineage>
</organism>
<evidence type="ECO:0000255" key="1">
    <source>
        <dbReference type="PROSITE-ProRule" id="PRU00086"/>
    </source>
</evidence>
<evidence type="ECO:0000255" key="2">
    <source>
        <dbReference type="PROSITE-ProRule" id="PRU00159"/>
    </source>
</evidence>
<evidence type="ECO:0000256" key="3">
    <source>
        <dbReference type="SAM" id="MobiDB-lite"/>
    </source>
</evidence>
<evidence type="ECO:0000269" key="4">
    <source>
    </source>
</evidence>
<evidence type="ECO:0000269" key="5">
    <source>
    </source>
</evidence>
<evidence type="ECO:0000269" key="6">
    <source>
    </source>
</evidence>
<evidence type="ECO:0000269" key="7">
    <source>
    </source>
</evidence>
<evidence type="ECO:0000269" key="8">
    <source>
    </source>
</evidence>
<evidence type="ECO:0000269" key="9">
    <source>
    </source>
</evidence>
<evidence type="ECO:0000269" key="10">
    <source>
    </source>
</evidence>
<evidence type="ECO:0000269" key="11">
    <source>
    </source>
</evidence>
<evidence type="ECO:0000305" key="12"/>
<evidence type="ECO:0007744" key="13">
    <source>
    </source>
</evidence>
<evidence type="ECO:0007744" key="14">
    <source>
    </source>
</evidence>
<evidence type="ECO:0007829" key="15">
    <source>
        <dbReference type="PDB" id="1DMZ"/>
    </source>
</evidence>
<evidence type="ECO:0007829" key="16">
    <source>
        <dbReference type="PDB" id="1FHQ"/>
    </source>
</evidence>
<evidence type="ECO:0007829" key="17">
    <source>
        <dbReference type="PDB" id="1G3G"/>
    </source>
</evidence>
<evidence type="ECO:0007829" key="18">
    <source>
        <dbReference type="PDB" id="1G6G"/>
    </source>
</evidence>
<evidence type="ECO:0007829" key="19">
    <source>
        <dbReference type="PDB" id="1QU5"/>
    </source>
</evidence>
<evidence type="ECO:0007829" key="20">
    <source>
        <dbReference type="PDB" id="2YGV"/>
    </source>
</evidence>
<evidence type="ECO:0007829" key="21">
    <source>
        <dbReference type="PDB" id="4PDP"/>
    </source>
</evidence>
<evidence type="ECO:0007829" key="22">
    <source>
        <dbReference type="PDB" id="5T2F"/>
    </source>
</evidence>
<evidence type="ECO:0007829" key="23">
    <source>
        <dbReference type="PDB" id="5XZV"/>
    </source>
</evidence>
<evidence type="ECO:0007829" key="24">
    <source>
        <dbReference type="PDB" id="5XZW"/>
    </source>
</evidence>
<comment type="function">
    <text evidence="4 6 9 10 11">Controls S-phase checkpoint as well as G1 and G2 DNA damage checkpoints. Phosphorylates proteins on serine, threonine, and tyrosine. Prevents entry into anaphase and mitotic exit after DNA damage via regulation of the Polo kinase CDC5. Seems to be involved in the phosphorylation of RPH1.</text>
</comment>
<comment type="catalytic activity">
    <reaction>
        <text>L-seryl-[protein] + ATP = O-phospho-L-seryl-[protein] + ADP + H(+)</text>
        <dbReference type="Rhea" id="RHEA:17989"/>
        <dbReference type="Rhea" id="RHEA-COMP:9863"/>
        <dbReference type="Rhea" id="RHEA-COMP:11604"/>
        <dbReference type="ChEBI" id="CHEBI:15378"/>
        <dbReference type="ChEBI" id="CHEBI:29999"/>
        <dbReference type="ChEBI" id="CHEBI:30616"/>
        <dbReference type="ChEBI" id="CHEBI:83421"/>
        <dbReference type="ChEBI" id="CHEBI:456216"/>
        <dbReference type="EC" id="2.7.12.1"/>
    </reaction>
</comment>
<comment type="catalytic activity">
    <reaction>
        <text>L-threonyl-[protein] + ATP = O-phospho-L-threonyl-[protein] + ADP + H(+)</text>
        <dbReference type="Rhea" id="RHEA:46608"/>
        <dbReference type="Rhea" id="RHEA-COMP:11060"/>
        <dbReference type="Rhea" id="RHEA-COMP:11605"/>
        <dbReference type="ChEBI" id="CHEBI:15378"/>
        <dbReference type="ChEBI" id="CHEBI:30013"/>
        <dbReference type="ChEBI" id="CHEBI:30616"/>
        <dbReference type="ChEBI" id="CHEBI:61977"/>
        <dbReference type="ChEBI" id="CHEBI:456216"/>
        <dbReference type="EC" id="2.7.12.1"/>
    </reaction>
</comment>
<comment type="catalytic activity">
    <reaction>
        <text>L-tyrosyl-[protein] + ATP = O-phospho-L-tyrosyl-[protein] + ADP + H(+)</text>
        <dbReference type="Rhea" id="RHEA:10596"/>
        <dbReference type="Rhea" id="RHEA-COMP:10136"/>
        <dbReference type="Rhea" id="RHEA-COMP:20101"/>
        <dbReference type="ChEBI" id="CHEBI:15378"/>
        <dbReference type="ChEBI" id="CHEBI:30616"/>
        <dbReference type="ChEBI" id="CHEBI:46858"/>
        <dbReference type="ChEBI" id="CHEBI:61978"/>
        <dbReference type="ChEBI" id="CHEBI:456216"/>
        <dbReference type="EC" id="2.7.12.1"/>
    </reaction>
</comment>
<comment type="activity regulation">
    <text evidence="7">Inactivated by dephosphorylation via recruitment of PTC2.</text>
</comment>
<comment type="subunit">
    <text evidence="7 9">Interacts (via domain FHA 1) with PTC2 (when phosphorylated); the interaction is direct and serves to regulate DNA damage checkpoint signaling (PubMed:12667463). Interacts with PIN4 (PubMed:15024067).</text>
</comment>
<comment type="interaction">
    <interactant intactId="EBI-17843">
        <id>P22216</id>
    </interactant>
    <interactant intactId="EBI-3003">
        <id>P32447</id>
        <label>ASF1</label>
    </interactant>
    <organismsDiffer>false</organismsDiffer>
    <experiments>11</experiments>
</comment>
<comment type="interaction">
    <interactant intactId="EBI-17843">
        <id>P22216</id>
    </interactant>
    <interactant intactId="EBI-3672">
        <id>P34730</id>
        <label>BMH2</label>
    </interactant>
    <organismsDiffer>false</organismsDiffer>
    <experiments>2</experiments>
</comment>
<comment type="interaction">
    <interactant intactId="EBI-17843">
        <id>P22216</id>
    </interactant>
    <interactant intactId="EBI-4440">
        <id>P32562</id>
        <label>CDC5</label>
    </interactant>
    <organismsDiffer>false</organismsDiffer>
    <experiments>3</experiments>
</comment>
<comment type="interaction">
    <interactant intactId="EBI-17843">
        <id>P22216</id>
    </interactant>
    <interactant intactId="EBI-4077">
        <id>P40969</id>
        <label>CEP3</label>
    </interactant>
    <organismsDiffer>false</organismsDiffer>
    <experiments>2</experiments>
</comment>
<comment type="interaction">
    <interactant intactId="EBI-17843">
        <id>P22216</id>
    </interactant>
    <interactant intactId="EBI-6194">
        <id>P39009</id>
        <label>DUN1</label>
    </interactant>
    <organismsDiffer>false</organismsDiffer>
    <experiments>3</experiments>
</comment>
<comment type="interaction">
    <interactant intactId="EBI-17843">
        <id>P22216</id>
    </interactant>
    <interactant intactId="EBI-21256">
        <id>P34217</id>
        <label>PIN4</label>
    </interactant>
    <organismsDiffer>false</organismsDiffer>
    <experiments>3</experiments>
</comment>
<comment type="interaction">
    <interactant intactId="EBI-17843">
        <id>P22216</id>
    </interactant>
    <interactant intactId="EBI-29107">
        <id>P40164</id>
        <label>PSY2</label>
    </interactant>
    <organismsDiffer>false</organismsDiffer>
    <experiments>3</experiments>
</comment>
<comment type="interaction">
    <interactant intactId="EBI-17843">
        <id>P22216</id>
    </interactant>
    <interactant intactId="EBI-14788">
        <id>P14737</id>
        <label>RAD9</label>
    </interactant>
    <organismsDiffer>false</organismsDiffer>
    <experiments>12</experiments>
</comment>
<comment type="interaction">
    <interactant intactId="EBI-17843">
        <id>P22216</id>
    </interactant>
    <interactant intactId="EBI-17059">
        <id>P35187</id>
        <label>SGS1</label>
    </interactant>
    <organismsDiffer>false</organismsDiffer>
    <experiments>3</experiments>
</comment>
<comment type="interaction">
    <interactant intactId="EBI-17843">
        <id>P22216</id>
    </interactant>
    <interactant intactId="EBI-23925">
        <id>P53135</id>
        <label>SLD3</label>
    </interactant>
    <organismsDiffer>false</organismsDiffer>
    <experiments>3</experiments>
</comment>
<comment type="subcellular location">
    <subcellularLocation>
        <location evidence="11">Nucleus</location>
    </subcellularLocation>
</comment>
<comment type="domain">
    <text>FHA domains are phosphothreonine recognition modules, FHA 1 strongly selects for Asp at position +3 relative to phosphothreonine, whereas FHA 2 selects for Ile in this position.</text>
</comment>
<comment type="PTM">
    <text evidence="5 7">Autophosphorylated (PubMed:10562568). Phosphorylated in response to DNA double-strand breaks; dephosphorylation is mediated by PTC2 and PTC3 (PubMed:12667463).</text>
</comment>
<comment type="miscellaneous">
    <text evidence="8">Present with 6900 molecules/cell in log phase SD medium.</text>
</comment>
<comment type="similarity">
    <text evidence="12">Belongs to the protein kinase superfamily. CAMK Ser/Thr protein kinase family. CHEK2 subfamily.</text>
</comment>
<sequence>MENITQPTQQSTQATQRFLIEKFSQEQIGENIVCRVICTTGQIPIRDLSADISQVLKEKRSIKKVWTFGRNPACDYHLGNISRLSNKHFQILLGEDGNLLLNDISTNGTWLNGQKVEKNSNQLLSQGDEITVGVGVESDILSLVIFINDKFKQCLEQNKVDRIRSNLKNTSKIASPGLTSSTASSMVANKTGIFKDFSIIDEVVGQGAFATVKKAIERTTGKTFAVKIISKRKVIGNMDGVTRELEVLQKLNHPRIVRLKGFYEDTESYYMVMEFVSGGDLMDFVAAHGAVGEDAGREISRQILTAIKYIHSMGISHRDLKPDNILIEQDDPVLVKITDFGLAKVQGNGSFMKTFCGTLAYVAPEVIRGKDTSVSPDEYEERNEYSSLVDMWSMGCLVYVILTGHLPFSGSTQDQLYKQIGRGSYHEGPLKDFRISEEARDFIDSLLQVDPNNRSTAAKALNHPWIKMSPLGSQSYGDFSQISLSQSLSQQKLLENMDDAQYEFVKAQRKLQMEQQLQEQDQEDQDGKIQGFKIPAHAPIRYTQPKSIEAETREQKLLHSNNTENVKSSKKKGNGRFLTLKPLPDSIIQESLEIQQGVNPFFIGRSEDCNCKIEDNRLSRVHCFIFKKRHAVGKSMYESPAQGLDDIWYCHTGTNVSYLNNNRMIQGTKFLLQDGDEIKIIWDKNNKFVIGFKVEINDTTGLFNEGLGMLQEQRVVLKQTAEEKDLVKKLTQMMAAQRANQPSASSSSMSAKKPPVSDTNNNGNNSVLNDLVESPINANTGNILKRIHSVSLSQSQIDPSKKVKRAKLDQTSKGPENLQFS</sequence>
<gene>
    <name type="primary">RAD53</name>
    <name type="synonym">MEC2</name>
    <name type="synonym">SAD1</name>
    <name type="synonym">SPK1</name>
    <name type="ordered locus">YPL153C</name>
    <name type="ORF">P2588</name>
</gene>
<protein>
    <recommendedName>
        <fullName>Serine/threonine-protein kinase RAD53</fullName>
        <ecNumber>2.7.12.1</ecNumber>
    </recommendedName>
    <alternativeName>
        <fullName>CHEK2 homolog</fullName>
    </alternativeName>
    <alternativeName>
        <fullName>Serine-protein kinase 1</fullName>
    </alternativeName>
</protein>